<name>CB23_TETTH</name>
<accession>P20473</accession>
<dbReference type="EMBL" id="J05227">
    <property type="protein sequence ID" value="AAA30129.1"/>
    <property type="molecule type" value="mRNA"/>
</dbReference>
<dbReference type="PIR" id="A35535">
    <property type="entry name" value="A35535"/>
</dbReference>
<dbReference type="GO" id="GO:0005829">
    <property type="term" value="C:cytosol"/>
    <property type="evidence" value="ECO:0007669"/>
    <property type="project" value="TreeGrafter"/>
</dbReference>
<dbReference type="GO" id="GO:0005634">
    <property type="term" value="C:nucleus"/>
    <property type="evidence" value="ECO:0007669"/>
    <property type="project" value="TreeGrafter"/>
</dbReference>
<dbReference type="GO" id="GO:0005509">
    <property type="term" value="F:calcium ion binding"/>
    <property type="evidence" value="ECO:0007669"/>
    <property type="project" value="InterPro"/>
</dbReference>
<dbReference type="GO" id="GO:0051480">
    <property type="term" value="P:regulation of cytosolic calcium ion concentration"/>
    <property type="evidence" value="ECO:0007669"/>
    <property type="project" value="TreeGrafter"/>
</dbReference>
<dbReference type="Gene3D" id="1.10.238.10">
    <property type="entry name" value="EF-hand"/>
    <property type="match status" value="2"/>
</dbReference>
<dbReference type="InterPro" id="IPR051001">
    <property type="entry name" value="Calbindin_Ca-bind"/>
</dbReference>
<dbReference type="InterPro" id="IPR011992">
    <property type="entry name" value="EF-hand-dom_pair"/>
</dbReference>
<dbReference type="InterPro" id="IPR018247">
    <property type="entry name" value="EF_Hand_1_Ca_BS"/>
</dbReference>
<dbReference type="InterPro" id="IPR002048">
    <property type="entry name" value="EF_hand_dom"/>
</dbReference>
<dbReference type="PANTHER" id="PTHR19972">
    <property type="entry name" value="CALBINDIN"/>
    <property type="match status" value="1"/>
</dbReference>
<dbReference type="PANTHER" id="PTHR19972:SF10">
    <property type="entry name" value="CALBINDIN-32"/>
    <property type="match status" value="1"/>
</dbReference>
<dbReference type="Pfam" id="PF13499">
    <property type="entry name" value="EF-hand_7"/>
    <property type="match status" value="2"/>
</dbReference>
<dbReference type="SMART" id="SM00054">
    <property type="entry name" value="EFh"/>
    <property type="match status" value="4"/>
</dbReference>
<dbReference type="SUPFAM" id="SSF47473">
    <property type="entry name" value="EF-hand"/>
    <property type="match status" value="1"/>
</dbReference>
<dbReference type="PROSITE" id="PS00018">
    <property type="entry name" value="EF_HAND_1"/>
    <property type="match status" value="4"/>
</dbReference>
<dbReference type="PROSITE" id="PS50222">
    <property type="entry name" value="EF_HAND_2"/>
    <property type="match status" value="4"/>
</dbReference>
<reference key="1">
    <citation type="journal article" date="1990" name="J. Biol. Chem.">
        <title>The third calmodulin family protein in Tetrahymena. Cloning of the cDNA for Tetrahymena calcium-binding protein of 23 kDa (TCBP-23).</title>
        <authorList>
            <person name="Takemasa T."/>
            <person name="Takagi T."/>
            <person name="Kobayashi T."/>
            <person name="Konishi K."/>
            <person name="Watanabe Y."/>
        </authorList>
    </citation>
    <scope>NUCLEOTIDE SEQUENCE [MRNA]</scope>
    <scope>PROTEIN SEQUENCE OF 1-103</scope>
    <source>
        <strain>B1868</strain>
    </source>
</reference>
<comment type="function">
    <text>Expected to play a crucial role in calcium-dependent regulation of ciliary movement.</text>
</comment>
<evidence type="ECO:0000255" key="1">
    <source>
        <dbReference type="PROSITE-ProRule" id="PRU00448"/>
    </source>
</evidence>
<feature type="chain" id="PRO_0000004138" description="23 kDa calcium-binding protein">
    <location>
        <begin position="1"/>
        <end position="207"/>
    </location>
</feature>
<feature type="chain" id="PRO_0000004139" description="12 kDa calcium-binding protein">
    <location>
        <begin position="1"/>
        <end position="103"/>
    </location>
</feature>
<feature type="domain" description="EF-hand 1" evidence="1">
    <location>
        <begin position="17"/>
        <end position="52"/>
    </location>
</feature>
<feature type="domain" description="EF-hand 2" evidence="1">
    <location>
        <begin position="60"/>
        <end position="95"/>
    </location>
</feature>
<feature type="domain" description="EF-hand 3" evidence="1">
    <location>
        <begin position="119"/>
        <end position="154"/>
    </location>
</feature>
<feature type="domain" description="EF-hand 4" evidence="1">
    <location>
        <begin position="161"/>
        <end position="196"/>
    </location>
</feature>
<feature type="binding site" evidence="1">
    <location>
        <position position="30"/>
    </location>
    <ligand>
        <name>Ca(2+)</name>
        <dbReference type="ChEBI" id="CHEBI:29108"/>
        <label>1</label>
    </ligand>
</feature>
<feature type="binding site" evidence="1">
    <location>
        <position position="32"/>
    </location>
    <ligand>
        <name>Ca(2+)</name>
        <dbReference type="ChEBI" id="CHEBI:29108"/>
        <label>1</label>
    </ligand>
</feature>
<feature type="binding site" evidence="1">
    <location>
        <position position="34"/>
    </location>
    <ligand>
        <name>Ca(2+)</name>
        <dbReference type="ChEBI" id="CHEBI:29108"/>
        <label>1</label>
    </ligand>
</feature>
<feature type="binding site" evidence="1">
    <location>
        <position position="36"/>
    </location>
    <ligand>
        <name>Ca(2+)</name>
        <dbReference type="ChEBI" id="CHEBI:29108"/>
        <label>1</label>
    </ligand>
</feature>
<feature type="binding site" evidence="1">
    <location>
        <position position="41"/>
    </location>
    <ligand>
        <name>Ca(2+)</name>
        <dbReference type="ChEBI" id="CHEBI:29108"/>
        <label>1</label>
    </ligand>
</feature>
<feature type="binding site" evidence="1">
    <location>
        <position position="73"/>
    </location>
    <ligand>
        <name>Ca(2+)</name>
        <dbReference type="ChEBI" id="CHEBI:29108"/>
        <label>2</label>
    </ligand>
</feature>
<feature type="binding site" evidence="1">
    <location>
        <position position="75"/>
    </location>
    <ligand>
        <name>Ca(2+)</name>
        <dbReference type="ChEBI" id="CHEBI:29108"/>
        <label>2</label>
    </ligand>
</feature>
<feature type="binding site" evidence="1">
    <location>
        <position position="77"/>
    </location>
    <ligand>
        <name>Ca(2+)</name>
        <dbReference type="ChEBI" id="CHEBI:29108"/>
        <label>2</label>
    </ligand>
</feature>
<feature type="binding site" evidence="1">
    <location>
        <position position="84"/>
    </location>
    <ligand>
        <name>Ca(2+)</name>
        <dbReference type="ChEBI" id="CHEBI:29108"/>
        <label>2</label>
    </ligand>
</feature>
<feature type="binding site" evidence="1">
    <location>
        <position position="132"/>
    </location>
    <ligand>
        <name>Ca(2+)</name>
        <dbReference type="ChEBI" id="CHEBI:29108"/>
        <label>3</label>
    </ligand>
</feature>
<feature type="binding site" evidence="1">
    <location>
        <position position="134"/>
    </location>
    <ligand>
        <name>Ca(2+)</name>
        <dbReference type="ChEBI" id="CHEBI:29108"/>
        <label>3</label>
    </ligand>
</feature>
<feature type="binding site" evidence="1">
    <location>
        <position position="136"/>
    </location>
    <ligand>
        <name>Ca(2+)</name>
        <dbReference type="ChEBI" id="CHEBI:29108"/>
        <label>3</label>
    </ligand>
</feature>
<feature type="binding site" evidence="1">
    <location>
        <position position="138"/>
    </location>
    <ligand>
        <name>Ca(2+)</name>
        <dbReference type="ChEBI" id="CHEBI:29108"/>
        <label>3</label>
    </ligand>
</feature>
<feature type="binding site" evidence="1">
    <location>
        <position position="143"/>
    </location>
    <ligand>
        <name>Ca(2+)</name>
        <dbReference type="ChEBI" id="CHEBI:29108"/>
        <label>3</label>
    </ligand>
</feature>
<feature type="binding site" evidence="1">
    <location>
        <position position="174"/>
    </location>
    <ligand>
        <name>Ca(2+)</name>
        <dbReference type="ChEBI" id="CHEBI:29108"/>
        <label>4</label>
    </ligand>
</feature>
<feature type="binding site" evidence="1">
    <location>
        <position position="176"/>
    </location>
    <ligand>
        <name>Ca(2+)</name>
        <dbReference type="ChEBI" id="CHEBI:29108"/>
        <label>4</label>
    </ligand>
</feature>
<feature type="binding site" evidence="1">
    <location>
        <position position="178"/>
    </location>
    <ligand>
        <name>Ca(2+)</name>
        <dbReference type="ChEBI" id="CHEBI:29108"/>
        <label>4</label>
    </ligand>
</feature>
<feature type="binding site" evidence="1">
    <location>
        <position position="180"/>
    </location>
    <ligand>
        <name>Ca(2+)</name>
        <dbReference type="ChEBI" id="CHEBI:29108"/>
        <label>4</label>
    </ligand>
</feature>
<feature type="binding site" evidence="1">
    <location>
        <position position="185"/>
    </location>
    <ligand>
        <name>Ca(2+)</name>
        <dbReference type="ChEBI" id="CHEBI:29108"/>
        <label>4</label>
    </ligand>
</feature>
<feature type="modified residue" description="Blocked amino end (Met)">
    <location>
        <position position="1"/>
    </location>
</feature>
<organism>
    <name type="scientific">Tetrahymena thermophila</name>
    <dbReference type="NCBI Taxonomy" id="5911"/>
    <lineage>
        <taxon>Eukaryota</taxon>
        <taxon>Sar</taxon>
        <taxon>Alveolata</taxon>
        <taxon>Ciliophora</taxon>
        <taxon>Intramacronucleata</taxon>
        <taxon>Oligohymenophorea</taxon>
        <taxon>Hymenostomatida</taxon>
        <taxon>Tetrahymenina</taxon>
        <taxon>Tetrahymenidae</taxon>
        <taxon>Tetrahymena</taxon>
    </lineage>
</organism>
<sequence length="207" mass="23413">MEHQIITQNVYAPDTEAKLDVARKLFAQFDSNKNGTLDPSEVAGLIKTTFENMGVKDYSVTADDVKLYMKSVDVDNNGLVSYSEYEEYVIACLKKAGFDCEVKQKVKRSAKKRDAATEMKLDVARRLFAKYDSDKSGQLEEKEVYGVITETYKQMGMDYKPTEADVKLWMSMTDTDKNGTVSIVEYEDFVISGLKKAGFMVKEFTQA</sequence>
<proteinExistence type="evidence at protein level"/>
<keyword id="KW-0106">Calcium</keyword>
<keyword id="KW-0903">Direct protein sequencing</keyword>
<keyword id="KW-0479">Metal-binding</keyword>
<keyword id="KW-0677">Repeat</keyword>
<protein>
    <recommendedName>
        <fullName>23 kDa calcium-binding protein</fullName>
    </recommendedName>
    <alternativeName>
        <fullName>TCBP-23</fullName>
    </alternativeName>
    <component>
        <recommendedName>
            <fullName>12 kDa calcium-binding protein</fullName>
        </recommendedName>
        <alternativeName>
            <fullName>TCBP-12</fullName>
        </alternativeName>
    </component>
</protein>